<comment type="function">
    <text evidence="1">Part of the twin-arginine translocation (Tat) system that transports large folded proteins containing a characteristic twin-arginine motif in their signal peptide across membranes. Together with TatC, TatB is part of a receptor directly interacting with Tat signal peptides. TatB may form an oligomeric binding site that transiently accommodates folded Tat precursor proteins before their translocation.</text>
</comment>
<comment type="subunit">
    <text evidence="1">The Tat system comprises two distinct complexes: a TatABC complex, containing multiple copies of TatA, TatB and TatC subunits, and a separate TatA complex, containing only TatA subunits. Substrates initially bind to the TatABC complex, which probably triggers association of the separate TatA complex to form the active translocon.</text>
</comment>
<comment type="subcellular location">
    <subcellularLocation>
        <location evidence="1">Cell inner membrane</location>
        <topology evidence="1">Single-pass membrane protein</topology>
    </subcellularLocation>
</comment>
<comment type="similarity">
    <text evidence="1">Belongs to the TatB family.</text>
</comment>
<sequence length="195" mass="20930">MFDIGFSELALIAVVALVVLGPERLPKAARFAGLWVRRARMQWDSVKQELERELEAEELKRSLQDVQASLREAEGQLRNTQQQVEDGARGLHDQARELHDEVGRDIDIRTSATPLAAPLELQADAPVVLEPGSAQPHTPVPAPAPVVAQAQPMAPAPKQTLVPAPHGSLTSTQVTTHAPTASATASSTSPQEKTP</sequence>
<proteinExistence type="inferred from homology"/>
<dbReference type="EMBL" id="AE008922">
    <property type="protein sequence ID" value="AAM43313.1"/>
    <property type="molecule type" value="Genomic_DNA"/>
</dbReference>
<dbReference type="RefSeq" id="NP_639431.1">
    <property type="nucleotide sequence ID" value="NC_003902.1"/>
</dbReference>
<dbReference type="RefSeq" id="WP_011039161.1">
    <property type="nucleotide sequence ID" value="NC_003902.1"/>
</dbReference>
<dbReference type="SMR" id="Q8P3H9"/>
<dbReference type="STRING" id="190485.XCC4092"/>
<dbReference type="EnsemblBacteria" id="AAM43313">
    <property type="protein sequence ID" value="AAM43313"/>
    <property type="gene ID" value="XCC4092"/>
</dbReference>
<dbReference type="KEGG" id="xcc:XCC4092"/>
<dbReference type="PATRIC" id="fig|190485.4.peg.4385"/>
<dbReference type="eggNOG" id="COG1826">
    <property type="taxonomic scope" value="Bacteria"/>
</dbReference>
<dbReference type="HOGENOM" id="CLU_086034_1_1_6"/>
<dbReference type="OrthoDB" id="9816005at2"/>
<dbReference type="Proteomes" id="UP000001010">
    <property type="component" value="Chromosome"/>
</dbReference>
<dbReference type="GO" id="GO:0033281">
    <property type="term" value="C:TAT protein transport complex"/>
    <property type="evidence" value="ECO:0007669"/>
    <property type="project" value="UniProtKB-UniRule"/>
</dbReference>
<dbReference type="GO" id="GO:0008320">
    <property type="term" value="F:protein transmembrane transporter activity"/>
    <property type="evidence" value="ECO:0007669"/>
    <property type="project" value="UniProtKB-UniRule"/>
</dbReference>
<dbReference type="GO" id="GO:0043953">
    <property type="term" value="P:protein transport by the Tat complex"/>
    <property type="evidence" value="ECO:0007669"/>
    <property type="project" value="UniProtKB-UniRule"/>
</dbReference>
<dbReference type="Gene3D" id="1.20.5.3310">
    <property type="match status" value="1"/>
</dbReference>
<dbReference type="HAMAP" id="MF_00237">
    <property type="entry name" value="TatB"/>
    <property type="match status" value="1"/>
</dbReference>
<dbReference type="InterPro" id="IPR003369">
    <property type="entry name" value="TatA/B/E"/>
</dbReference>
<dbReference type="InterPro" id="IPR018448">
    <property type="entry name" value="TatB"/>
</dbReference>
<dbReference type="NCBIfam" id="NF003400">
    <property type="entry name" value="PRK04654.1"/>
    <property type="match status" value="1"/>
</dbReference>
<dbReference type="NCBIfam" id="TIGR01410">
    <property type="entry name" value="tatB"/>
    <property type="match status" value="1"/>
</dbReference>
<dbReference type="PANTHER" id="PTHR33162">
    <property type="entry name" value="SEC-INDEPENDENT PROTEIN TRANSLOCASE PROTEIN TATA, CHLOROPLASTIC"/>
    <property type="match status" value="1"/>
</dbReference>
<dbReference type="PANTHER" id="PTHR33162:SF1">
    <property type="entry name" value="SEC-INDEPENDENT PROTEIN TRANSLOCASE PROTEIN TATA, CHLOROPLASTIC"/>
    <property type="match status" value="1"/>
</dbReference>
<dbReference type="Pfam" id="PF02416">
    <property type="entry name" value="TatA_B_E"/>
    <property type="match status" value="1"/>
</dbReference>
<dbReference type="PRINTS" id="PR01506">
    <property type="entry name" value="TATBPROTEIN"/>
</dbReference>
<accession>Q8P3H9</accession>
<keyword id="KW-0997">Cell inner membrane</keyword>
<keyword id="KW-1003">Cell membrane</keyword>
<keyword id="KW-0472">Membrane</keyword>
<keyword id="KW-0653">Protein transport</keyword>
<keyword id="KW-1185">Reference proteome</keyword>
<keyword id="KW-0811">Translocation</keyword>
<keyword id="KW-0812">Transmembrane</keyword>
<keyword id="KW-1133">Transmembrane helix</keyword>
<keyword id="KW-0813">Transport</keyword>
<feature type="chain" id="PRO_0000192678" description="Sec-independent protein translocase protein TatB">
    <location>
        <begin position="1"/>
        <end position="195"/>
    </location>
</feature>
<feature type="transmembrane region" description="Helical" evidence="1">
    <location>
        <begin position="1"/>
        <end position="21"/>
    </location>
</feature>
<feature type="region of interest" description="Disordered" evidence="2">
    <location>
        <begin position="130"/>
        <end position="195"/>
    </location>
</feature>
<feature type="compositionally biased region" description="Low complexity" evidence="2">
    <location>
        <begin position="145"/>
        <end position="157"/>
    </location>
</feature>
<feature type="compositionally biased region" description="Low complexity" evidence="2">
    <location>
        <begin position="175"/>
        <end position="195"/>
    </location>
</feature>
<gene>
    <name evidence="1" type="primary">tatB</name>
    <name type="ordered locus">XCC4092</name>
</gene>
<evidence type="ECO:0000255" key="1">
    <source>
        <dbReference type="HAMAP-Rule" id="MF_00237"/>
    </source>
</evidence>
<evidence type="ECO:0000256" key="2">
    <source>
        <dbReference type="SAM" id="MobiDB-lite"/>
    </source>
</evidence>
<reference key="1">
    <citation type="journal article" date="2002" name="Nature">
        <title>Comparison of the genomes of two Xanthomonas pathogens with differing host specificities.</title>
        <authorList>
            <person name="da Silva A.C.R."/>
            <person name="Ferro J.A."/>
            <person name="Reinach F.C."/>
            <person name="Farah C.S."/>
            <person name="Furlan L.R."/>
            <person name="Quaggio R.B."/>
            <person name="Monteiro-Vitorello C.B."/>
            <person name="Van Sluys M.A."/>
            <person name="Almeida N.F. Jr."/>
            <person name="Alves L.M.C."/>
            <person name="do Amaral A.M."/>
            <person name="Bertolini M.C."/>
            <person name="Camargo L.E.A."/>
            <person name="Camarotte G."/>
            <person name="Cannavan F."/>
            <person name="Cardozo J."/>
            <person name="Chambergo F."/>
            <person name="Ciapina L.P."/>
            <person name="Cicarelli R.M.B."/>
            <person name="Coutinho L.L."/>
            <person name="Cursino-Santos J.R."/>
            <person name="El-Dorry H."/>
            <person name="Faria J.B."/>
            <person name="Ferreira A.J.S."/>
            <person name="Ferreira R.C.C."/>
            <person name="Ferro M.I.T."/>
            <person name="Formighieri E.F."/>
            <person name="Franco M.C."/>
            <person name="Greggio C.C."/>
            <person name="Gruber A."/>
            <person name="Katsuyama A.M."/>
            <person name="Kishi L.T."/>
            <person name="Leite R.P."/>
            <person name="Lemos E.G.M."/>
            <person name="Lemos M.V.F."/>
            <person name="Locali E.C."/>
            <person name="Machado M.A."/>
            <person name="Madeira A.M.B.N."/>
            <person name="Martinez-Rossi N.M."/>
            <person name="Martins E.C."/>
            <person name="Meidanis J."/>
            <person name="Menck C.F.M."/>
            <person name="Miyaki C.Y."/>
            <person name="Moon D.H."/>
            <person name="Moreira L.M."/>
            <person name="Novo M.T.M."/>
            <person name="Okura V.K."/>
            <person name="Oliveira M.C."/>
            <person name="Oliveira V.R."/>
            <person name="Pereira H.A."/>
            <person name="Rossi A."/>
            <person name="Sena J.A.D."/>
            <person name="Silva C."/>
            <person name="de Souza R.F."/>
            <person name="Spinola L.A.F."/>
            <person name="Takita M.A."/>
            <person name="Tamura R.E."/>
            <person name="Teixeira E.C."/>
            <person name="Tezza R.I.D."/>
            <person name="Trindade dos Santos M."/>
            <person name="Truffi D."/>
            <person name="Tsai S.M."/>
            <person name="White F.F."/>
            <person name="Setubal J.C."/>
            <person name="Kitajima J.P."/>
        </authorList>
    </citation>
    <scope>NUCLEOTIDE SEQUENCE [LARGE SCALE GENOMIC DNA]</scope>
    <source>
        <strain>ATCC 33913 / DSM 3586 / NCPPB 528 / LMG 568 / P 25</strain>
    </source>
</reference>
<protein>
    <recommendedName>
        <fullName evidence="1">Sec-independent protein translocase protein TatB</fullName>
    </recommendedName>
</protein>
<name>TATB_XANCP</name>
<organism>
    <name type="scientific">Xanthomonas campestris pv. campestris (strain ATCC 33913 / DSM 3586 / NCPPB 528 / LMG 568 / P 25)</name>
    <dbReference type="NCBI Taxonomy" id="190485"/>
    <lineage>
        <taxon>Bacteria</taxon>
        <taxon>Pseudomonadati</taxon>
        <taxon>Pseudomonadota</taxon>
        <taxon>Gammaproteobacteria</taxon>
        <taxon>Lysobacterales</taxon>
        <taxon>Lysobacteraceae</taxon>
        <taxon>Xanthomonas</taxon>
    </lineage>
</organism>